<reference key="1">
    <citation type="submission" date="2000-09" db="EMBL/GenBank/DDBJ databases">
        <title>Novel transcript in human breast cancer cells.</title>
        <authorList>
            <person name="Gokhale P.C."/>
            <person name="Kumar D."/>
            <person name="Monia B.P."/>
            <person name="Rahman A."/>
            <person name="Dritschilo A."/>
            <person name="Kasid U."/>
        </authorList>
    </citation>
    <scope>NUCLEOTIDE SEQUENCE [MRNA] (ISOFORM 1)</scope>
    <source>
        <tissue>Mammary cancer</tissue>
    </source>
</reference>
<reference key="2">
    <citation type="submission" date="2002-03" db="EMBL/GenBank/DDBJ databases">
        <title>Cloning and identification of human gene 8 transactivated by hepatitis B virus X antigen.</title>
        <authorList>
            <person name="Liu Y."/>
            <person name="Cheng J."/>
            <person name="Lu Y."/>
            <person name="Wang G."/>
            <person name="Zhang L."/>
            <person name="Chen J."/>
            <person name="Li L."/>
        </authorList>
    </citation>
    <scope>NUCLEOTIDE SEQUENCE [MRNA] (ISOFORM 1)</scope>
    <scope>VARIANTS MET-332 AND LEU-395</scope>
</reference>
<reference key="3">
    <citation type="journal article" date="2004" name="Nat. Genet.">
        <title>Complete sequencing and characterization of 21,243 full-length human cDNAs.</title>
        <authorList>
            <person name="Ota T."/>
            <person name="Suzuki Y."/>
            <person name="Nishikawa T."/>
            <person name="Otsuki T."/>
            <person name="Sugiyama T."/>
            <person name="Irie R."/>
            <person name="Wakamatsu A."/>
            <person name="Hayashi K."/>
            <person name="Sato H."/>
            <person name="Nagai K."/>
            <person name="Kimura K."/>
            <person name="Makita H."/>
            <person name="Sekine M."/>
            <person name="Obayashi M."/>
            <person name="Nishi T."/>
            <person name="Shibahara T."/>
            <person name="Tanaka T."/>
            <person name="Ishii S."/>
            <person name="Yamamoto J."/>
            <person name="Saito K."/>
            <person name="Kawai Y."/>
            <person name="Isono Y."/>
            <person name="Nakamura Y."/>
            <person name="Nagahari K."/>
            <person name="Murakami K."/>
            <person name="Yasuda T."/>
            <person name="Iwayanagi T."/>
            <person name="Wagatsuma M."/>
            <person name="Shiratori A."/>
            <person name="Sudo H."/>
            <person name="Hosoiri T."/>
            <person name="Kaku Y."/>
            <person name="Kodaira H."/>
            <person name="Kondo H."/>
            <person name="Sugawara M."/>
            <person name="Takahashi M."/>
            <person name="Kanda K."/>
            <person name="Yokoi T."/>
            <person name="Furuya T."/>
            <person name="Kikkawa E."/>
            <person name="Omura Y."/>
            <person name="Abe K."/>
            <person name="Kamihara K."/>
            <person name="Katsuta N."/>
            <person name="Sato K."/>
            <person name="Tanikawa M."/>
            <person name="Yamazaki M."/>
            <person name="Ninomiya K."/>
            <person name="Ishibashi T."/>
            <person name="Yamashita H."/>
            <person name="Murakawa K."/>
            <person name="Fujimori K."/>
            <person name="Tanai H."/>
            <person name="Kimata M."/>
            <person name="Watanabe M."/>
            <person name="Hiraoka S."/>
            <person name="Chiba Y."/>
            <person name="Ishida S."/>
            <person name="Ono Y."/>
            <person name="Takiguchi S."/>
            <person name="Watanabe S."/>
            <person name="Yosida M."/>
            <person name="Hotuta T."/>
            <person name="Kusano J."/>
            <person name="Kanehori K."/>
            <person name="Takahashi-Fujii A."/>
            <person name="Hara H."/>
            <person name="Tanase T.-O."/>
            <person name="Nomura Y."/>
            <person name="Togiya S."/>
            <person name="Komai F."/>
            <person name="Hara R."/>
            <person name="Takeuchi K."/>
            <person name="Arita M."/>
            <person name="Imose N."/>
            <person name="Musashino K."/>
            <person name="Yuuki H."/>
            <person name="Oshima A."/>
            <person name="Sasaki N."/>
            <person name="Aotsuka S."/>
            <person name="Yoshikawa Y."/>
            <person name="Matsunawa H."/>
            <person name="Ichihara T."/>
            <person name="Shiohata N."/>
            <person name="Sano S."/>
            <person name="Moriya S."/>
            <person name="Momiyama H."/>
            <person name="Satoh N."/>
            <person name="Takami S."/>
            <person name="Terashima Y."/>
            <person name="Suzuki O."/>
            <person name="Nakagawa S."/>
            <person name="Senoh A."/>
            <person name="Mizoguchi H."/>
            <person name="Goto Y."/>
            <person name="Shimizu F."/>
            <person name="Wakebe H."/>
            <person name="Hishigaki H."/>
            <person name="Watanabe T."/>
            <person name="Sugiyama A."/>
            <person name="Takemoto M."/>
            <person name="Kawakami B."/>
            <person name="Yamazaki M."/>
            <person name="Watanabe K."/>
            <person name="Kumagai A."/>
            <person name="Itakura S."/>
            <person name="Fukuzumi Y."/>
            <person name="Fujimori Y."/>
            <person name="Komiyama M."/>
            <person name="Tashiro H."/>
            <person name="Tanigami A."/>
            <person name="Fujiwara T."/>
            <person name="Ono T."/>
            <person name="Yamada K."/>
            <person name="Fujii Y."/>
            <person name="Ozaki K."/>
            <person name="Hirao M."/>
            <person name="Ohmori Y."/>
            <person name="Kawabata A."/>
            <person name="Hikiji T."/>
            <person name="Kobatake N."/>
            <person name="Inagaki H."/>
            <person name="Ikema Y."/>
            <person name="Okamoto S."/>
            <person name="Okitani R."/>
            <person name="Kawakami T."/>
            <person name="Noguchi S."/>
            <person name="Itoh T."/>
            <person name="Shigeta K."/>
            <person name="Senba T."/>
            <person name="Matsumura K."/>
            <person name="Nakajima Y."/>
            <person name="Mizuno T."/>
            <person name="Morinaga M."/>
            <person name="Sasaki M."/>
            <person name="Togashi T."/>
            <person name="Oyama M."/>
            <person name="Hata H."/>
            <person name="Watanabe M."/>
            <person name="Komatsu T."/>
            <person name="Mizushima-Sugano J."/>
            <person name="Satoh T."/>
            <person name="Shirai Y."/>
            <person name="Takahashi Y."/>
            <person name="Nakagawa K."/>
            <person name="Okumura K."/>
            <person name="Nagase T."/>
            <person name="Nomura N."/>
            <person name="Kikuchi H."/>
            <person name="Masuho Y."/>
            <person name="Yamashita R."/>
            <person name="Nakai K."/>
            <person name="Yada T."/>
            <person name="Nakamura Y."/>
            <person name="Ohara O."/>
            <person name="Isogai T."/>
            <person name="Sugano S."/>
        </authorList>
    </citation>
    <scope>NUCLEOTIDE SEQUENCE [LARGE SCALE MRNA] (ISOFORMS 1 AND 2)</scope>
    <source>
        <tissue>Placenta</tissue>
    </source>
</reference>
<reference key="4">
    <citation type="journal article" date="2004" name="Nature">
        <title>The DNA sequence and comparative analysis of human chromosome 5.</title>
        <authorList>
            <person name="Schmutz J."/>
            <person name="Martin J."/>
            <person name="Terry A."/>
            <person name="Couronne O."/>
            <person name="Grimwood J."/>
            <person name="Lowry S."/>
            <person name="Gordon L.A."/>
            <person name="Scott D."/>
            <person name="Xie G."/>
            <person name="Huang W."/>
            <person name="Hellsten U."/>
            <person name="Tran-Gyamfi M."/>
            <person name="She X."/>
            <person name="Prabhakar S."/>
            <person name="Aerts A."/>
            <person name="Altherr M."/>
            <person name="Bajorek E."/>
            <person name="Black S."/>
            <person name="Branscomb E."/>
            <person name="Caoile C."/>
            <person name="Challacombe J.F."/>
            <person name="Chan Y.M."/>
            <person name="Denys M."/>
            <person name="Detter J.C."/>
            <person name="Escobar J."/>
            <person name="Flowers D."/>
            <person name="Fotopulos D."/>
            <person name="Glavina T."/>
            <person name="Gomez M."/>
            <person name="Gonzales E."/>
            <person name="Goodstein D."/>
            <person name="Grigoriev I."/>
            <person name="Groza M."/>
            <person name="Hammon N."/>
            <person name="Hawkins T."/>
            <person name="Haydu L."/>
            <person name="Israni S."/>
            <person name="Jett J."/>
            <person name="Kadner K."/>
            <person name="Kimball H."/>
            <person name="Kobayashi A."/>
            <person name="Lopez F."/>
            <person name="Lou Y."/>
            <person name="Martinez D."/>
            <person name="Medina C."/>
            <person name="Morgan J."/>
            <person name="Nandkeshwar R."/>
            <person name="Noonan J.P."/>
            <person name="Pitluck S."/>
            <person name="Pollard M."/>
            <person name="Predki P."/>
            <person name="Priest J."/>
            <person name="Ramirez L."/>
            <person name="Retterer J."/>
            <person name="Rodriguez A."/>
            <person name="Rogers S."/>
            <person name="Salamov A."/>
            <person name="Salazar A."/>
            <person name="Thayer N."/>
            <person name="Tice H."/>
            <person name="Tsai M."/>
            <person name="Ustaszewska A."/>
            <person name="Vo N."/>
            <person name="Wheeler J."/>
            <person name="Wu K."/>
            <person name="Yang J."/>
            <person name="Dickson M."/>
            <person name="Cheng J.-F."/>
            <person name="Eichler E.E."/>
            <person name="Olsen A."/>
            <person name="Pennacchio L.A."/>
            <person name="Rokhsar D.S."/>
            <person name="Richardson P."/>
            <person name="Lucas S.M."/>
            <person name="Myers R.M."/>
            <person name="Rubin E.M."/>
        </authorList>
    </citation>
    <scope>NUCLEOTIDE SEQUENCE [LARGE SCALE GENOMIC DNA]</scope>
</reference>
<reference key="5">
    <citation type="submission" date="2005-07" db="EMBL/GenBank/DDBJ databases">
        <authorList>
            <person name="Mural R.J."/>
            <person name="Istrail S."/>
            <person name="Sutton G.G."/>
            <person name="Florea L."/>
            <person name="Halpern A.L."/>
            <person name="Mobarry C.M."/>
            <person name="Lippert R."/>
            <person name="Walenz B."/>
            <person name="Shatkay H."/>
            <person name="Dew I."/>
            <person name="Miller J.R."/>
            <person name="Flanigan M.J."/>
            <person name="Edwards N.J."/>
            <person name="Bolanos R."/>
            <person name="Fasulo D."/>
            <person name="Halldorsson B.V."/>
            <person name="Hannenhalli S."/>
            <person name="Turner R."/>
            <person name="Yooseph S."/>
            <person name="Lu F."/>
            <person name="Nusskern D.R."/>
            <person name="Shue B.C."/>
            <person name="Zheng X.H."/>
            <person name="Zhong F."/>
            <person name="Delcher A.L."/>
            <person name="Huson D.H."/>
            <person name="Kravitz S.A."/>
            <person name="Mouchard L."/>
            <person name="Reinert K."/>
            <person name="Remington K.A."/>
            <person name="Clark A.G."/>
            <person name="Waterman M.S."/>
            <person name="Eichler E.E."/>
            <person name="Adams M.D."/>
            <person name="Hunkapiller M.W."/>
            <person name="Myers E.W."/>
            <person name="Venter J.C."/>
        </authorList>
    </citation>
    <scope>NUCLEOTIDE SEQUENCE [LARGE SCALE GENOMIC DNA]</scope>
</reference>
<reference key="6">
    <citation type="journal article" date="2004" name="Genome Res.">
        <title>The status, quality, and expansion of the NIH full-length cDNA project: the Mammalian Gene Collection (MGC).</title>
        <authorList>
            <consortium name="The MGC Project Team"/>
        </authorList>
    </citation>
    <scope>NUCLEOTIDE SEQUENCE [LARGE SCALE MRNA] (ISOFORM 1)</scope>
    <scope>VARIANTS MET-332 AND LEU-395</scope>
    <source>
        <tissue>Pancreas</tissue>
    </source>
</reference>
<reference key="7">
    <citation type="journal article" date="2009" name="Sci. Signal.">
        <title>Quantitative phosphoproteomic analysis of T cell receptor signaling reveals system-wide modulation of protein-protein interactions.</title>
        <authorList>
            <person name="Mayya V."/>
            <person name="Lundgren D.H."/>
            <person name="Hwang S.-I."/>
            <person name="Rezaul K."/>
            <person name="Wu L."/>
            <person name="Eng J.K."/>
            <person name="Rodionov V."/>
            <person name="Han D.K."/>
        </authorList>
    </citation>
    <scope>IDENTIFICATION BY MASS SPECTROMETRY [LARGE SCALE ANALYSIS]</scope>
    <source>
        <tissue>Leukemic T-cell</tissue>
    </source>
</reference>
<reference key="8">
    <citation type="journal article" date="2013" name="J. Proteome Res.">
        <title>Toward a comprehensive characterization of a human cancer cell phosphoproteome.</title>
        <authorList>
            <person name="Zhou H."/>
            <person name="Di Palma S."/>
            <person name="Preisinger C."/>
            <person name="Peng M."/>
            <person name="Polat A.N."/>
            <person name="Heck A.J."/>
            <person name="Mohammed S."/>
        </authorList>
    </citation>
    <scope>PHOSPHORYLATION [LARGE SCALE ANALYSIS] AT SER-160 AND SER-436</scope>
    <scope>IDENTIFICATION BY MASS SPECTROMETRY [LARGE SCALE ANALYSIS]</scope>
    <source>
        <tissue>Erythroleukemia</tissue>
    </source>
</reference>
<feature type="chain" id="PRO_0000284790" description="DEP domain-containing protein 1B">
    <location>
        <begin position="1"/>
        <end position="529"/>
    </location>
</feature>
<feature type="domain" description="DEP" evidence="1">
    <location>
        <begin position="24"/>
        <end position="108"/>
    </location>
</feature>
<feature type="domain" description="Rho-GAP" evidence="2">
    <location>
        <begin position="201"/>
        <end position="393"/>
    </location>
</feature>
<feature type="site" description="Arginine finger; crucial for GTP hydrolysis by stabilizing the transition state" evidence="2">
    <location>
        <position position="231"/>
    </location>
</feature>
<feature type="modified residue" description="Phosphoserine" evidence="7">
    <location>
        <position position="160"/>
    </location>
</feature>
<feature type="modified residue" description="Phosphoserine" evidence="7">
    <location>
        <position position="436"/>
    </location>
</feature>
<feature type="splice variant" id="VSP_042922" description="In isoform 2." evidence="5">
    <location>
        <begin position="414"/>
        <end position="475"/>
    </location>
</feature>
<feature type="sequence variant" id="VAR_031819" description="In dbSNP:rs17856590." evidence="3 4">
    <original>R</original>
    <variation>M</variation>
    <location>
        <position position="332"/>
    </location>
</feature>
<feature type="sequence variant" id="VAR_031820" description="In dbSNP:rs17851707." evidence="3 4">
    <original>V</original>
    <variation>L</variation>
    <location>
        <position position="395"/>
    </location>
</feature>
<feature type="sequence conflict" description="In Ref. 1; AAN31126 and 3; BAA92089." evidence="6" ref="1 3">
    <original>F</original>
    <variation>C</variation>
    <location>
        <position position="272"/>
    </location>
</feature>
<feature type="sequence conflict" description="In Ref. 1; AAN31126." evidence="6" ref="1">
    <original>R</original>
    <variation>K</variation>
    <location>
        <position position="380"/>
    </location>
</feature>
<feature type="sequence conflict" description="In Ref. 3; BAA92089." evidence="6" ref="3">
    <original>S</original>
    <variation>P</variation>
    <location>
        <position position="402"/>
    </location>
</feature>
<keyword id="KW-0025">Alternative splicing</keyword>
<keyword id="KW-0343">GTPase activation</keyword>
<keyword id="KW-0597">Phosphoprotein</keyword>
<keyword id="KW-1267">Proteomics identification</keyword>
<keyword id="KW-1185">Reference proteome</keyword>
<name>DEP1B_HUMAN</name>
<proteinExistence type="evidence at protein level"/>
<evidence type="ECO:0000255" key="1">
    <source>
        <dbReference type="PROSITE-ProRule" id="PRU00066"/>
    </source>
</evidence>
<evidence type="ECO:0000255" key="2">
    <source>
        <dbReference type="PROSITE-ProRule" id="PRU00172"/>
    </source>
</evidence>
<evidence type="ECO:0000269" key="3">
    <source>
    </source>
</evidence>
<evidence type="ECO:0000269" key="4">
    <source ref="2"/>
</evidence>
<evidence type="ECO:0000303" key="5">
    <source>
    </source>
</evidence>
<evidence type="ECO:0000305" key="6"/>
<evidence type="ECO:0007744" key="7">
    <source>
    </source>
</evidence>
<gene>
    <name type="primary">DEPDC1B</name>
    <name type="synonym">XTP8</name>
</gene>
<organism>
    <name type="scientific">Homo sapiens</name>
    <name type="common">Human</name>
    <dbReference type="NCBI Taxonomy" id="9606"/>
    <lineage>
        <taxon>Eukaryota</taxon>
        <taxon>Metazoa</taxon>
        <taxon>Chordata</taxon>
        <taxon>Craniata</taxon>
        <taxon>Vertebrata</taxon>
        <taxon>Euteleostomi</taxon>
        <taxon>Mammalia</taxon>
        <taxon>Eutheria</taxon>
        <taxon>Euarchontoglires</taxon>
        <taxon>Primates</taxon>
        <taxon>Haplorrhini</taxon>
        <taxon>Catarrhini</taxon>
        <taxon>Hominidae</taxon>
        <taxon>Homo</taxon>
    </lineage>
</organism>
<sequence length="529" mass="61771">MEHRIVGPGPYRATRLWNETVELFRAKMPLRKHRCRFKSYEHCFTAAEAVDWLHELLRCSQNFGPEVTRKQTVQLLKKFLKNHVIEDIKGKWGEEDFEDNRHLYRFPPSSPLKPYPKKPPNQKDVIKFPEWNDLPPGTSQENIPVRPVVMNSEMWYKRHSIAIGEVPACRLVHRRQLTEANVEEIWKSMTLSYLQKILGLDSLEEVLDVKLVNSKFIIHNVYSVSKQGVVILDDKSKELPHWVLSAMKCLANWPNCSDLKQPMYLGFEKDVFKTIADYYGHLKEPLLTFHLFDAFVSVLGLLQKEKVAVEAFQICCLLLPPENRRKLQLLMRMMARICLNKEMPPLCDGFGTRTLMVQTFSRCILCSKDEVDLDELLAARLVTFLMDNYQEILKVPLALQTSIEERVAHLRRVQIKYPGADMDITLSAPSFCRQISPEEFEYQRSYGSQEPLAALLEEVITDAKLSNKEKKKKLKQFQKSYPEVYQERFPTPESAALLFPEKPKPKPQLLMWALKKPFQPFQRTRSFRM</sequence>
<comment type="alternative products">
    <event type="alternative splicing"/>
    <isoform>
        <id>Q8WUY9-1</id>
        <name>1</name>
        <sequence type="displayed"/>
    </isoform>
    <isoform>
        <id>Q8WUY9-2</id>
        <name>2</name>
        <sequence type="described" ref="VSP_042922"/>
    </isoform>
</comment>
<comment type="sequence caution" evidence="6">
    <conflict type="erroneous initiation">
        <sequence resource="EMBL-CDS" id="AAH10904"/>
    </conflict>
</comment>
<comment type="sequence caution" evidence="6">
    <conflict type="erroneous initiation">
        <sequence resource="EMBL-CDS" id="BAA91529"/>
    </conflict>
</comment>
<accession>Q8WUY9</accession>
<accession>A8K3R9</accession>
<accession>B4DUT4</accession>
<accession>Q86WJ3</accession>
<accession>Q8IZY6</accession>
<accession>Q9NUN3</accession>
<accession>Q9NW57</accession>
<dbReference type="EMBL" id="AF303178">
    <property type="protein sequence ID" value="AAN31126.1"/>
    <property type="molecule type" value="mRNA"/>
</dbReference>
<dbReference type="EMBL" id="AF488828">
    <property type="protein sequence ID" value="AAO49477.1"/>
    <property type="molecule type" value="mRNA"/>
</dbReference>
<dbReference type="EMBL" id="AF490257">
    <property type="protein sequence ID" value="AAO85465.1"/>
    <property type="molecule type" value="mRNA"/>
</dbReference>
<dbReference type="EMBL" id="AK001166">
    <property type="protein sequence ID" value="BAA91529.1"/>
    <property type="status" value="ALT_INIT"/>
    <property type="molecule type" value="mRNA"/>
</dbReference>
<dbReference type="EMBL" id="AK002114">
    <property type="protein sequence ID" value="BAA92089.1"/>
    <property type="molecule type" value="mRNA"/>
</dbReference>
<dbReference type="EMBL" id="AK290684">
    <property type="protein sequence ID" value="BAF83373.1"/>
    <property type="molecule type" value="mRNA"/>
</dbReference>
<dbReference type="EMBL" id="AK300782">
    <property type="protein sequence ID" value="BAG62446.1"/>
    <property type="molecule type" value="mRNA"/>
</dbReference>
<dbReference type="EMBL" id="AC016591">
    <property type="status" value="NOT_ANNOTATED_CDS"/>
    <property type="molecule type" value="Genomic_DNA"/>
</dbReference>
<dbReference type="EMBL" id="AC109133">
    <property type="status" value="NOT_ANNOTATED_CDS"/>
    <property type="molecule type" value="Genomic_DNA"/>
</dbReference>
<dbReference type="EMBL" id="CH471123">
    <property type="protein sequence ID" value="EAW54998.1"/>
    <property type="molecule type" value="Genomic_DNA"/>
</dbReference>
<dbReference type="EMBL" id="BC010904">
    <property type="protein sequence ID" value="AAH10904.1"/>
    <property type="status" value="ALT_INIT"/>
    <property type="molecule type" value="mRNA"/>
</dbReference>
<dbReference type="EMBL" id="BC019075">
    <property type="protein sequence ID" value="AAH19075.1"/>
    <property type="molecule type" value="mRNA"/>
</dbReference>
<dbReference type="CCDS" id="CCDS3977.1">
    <molecule id="Q8WUY9-1"/>
</dbReference>
<dbReference type="CCDS" id="CCDS47214.1">
    <molecule id="Q8WUY9-2"/>
</dbReference>
<dbReference type="RefSeq" id="NP_001138680.1">
    <molecule id="Q8WUY9-2"/>
    <property type="nucleotide sequence ID" value="NM_001145208.2"/>
</dbReference>
<dbReference type="RefSeq" id="NP_060839.2">
    <molecule id="Q8WUY9-1"/>
    <property type="nucleotide sequence ID" value="NM_018369.3"/>
</dbReference>
<dbReference type="SMR" id="Q8WUY9"/>
<dbReference type="BioGRID" id="120903">
    <property type="interactions" value="195"/>
</dbReference>
<dbReference type="FunCoup" id="Q8WUY9">
    <property type="interactions" value="686"/>
</dbReference>
<dbReference type="IntAct" id="Q8WUY9">
    <property type="interactions" value="52"/>
</dbReference>
<dbReference type="MINT" id="Q8WUY9"/>
<dbReference type="STRING" id="9606.ENSP00000265036"/>
<dbReference type="iPTMnet" id="Q8WUY9"/>
<dbReference type="PhosphoSitePlus" id="Q8WUY9"/>
<dbReference type="SwissPalm" id="Q8WUY9"/>
<dbReference type="BioMuta" id="DEPDC1B"/>
<dbReference type="DMDM" id="145558895"/>
<dbReference type="jPOST" id="Q8WUY9"/>
<dbReference type="MassIVE" id="Q8WUY9"/>
<dbReference type="PaxDb" id="9606-ENSP00000265036"/>
<dbReference type="PeptideAtlas" id="Q8WUY9"/>
<dbReference type="ProteomicsDB" id="74728">
    <molecule id="Q8WUY9-1"/>
</dbReference>
<dbReference type="ProteomicsDB" id="74729">
    <molecule id="Q8WUY9-2"/>
</dbReference>
<dbReference type="Pumba" id="Q8WUY9"/>
<dbReference type="Antibodypedia" id="23636">
    <property type="antibodies" value="169 antibodies from 23 providers"/>
</dbReference>
<dbReference type="DNASU" id="55789"/>
<dbReference type="Ensembl" id="ENST00000265036.10">
    <molecule id="Q8WUY9-1"/>
    <property type="protein sequence ID" value="ENSP00000265036.5"/>
    <property type="gene ID" value="ENSG00000035499.13"/>
</dbReference>
<dbReference type="Ensembl" id="ENST00000453022.6">
    <molecule id="Q8WUY9-2"/>
    <property type="protein sequence ID" value="ENSP00000389101.2"/>
    <property type="gene ID" value="ENSG00000035499.13"/>
</dbReference>
<dbReference type="GeneID" id="55789"/>
<dbReference type="KEGG" id="hsa:55789"/>
<dbReference type="MANE-Select" id="ENST00000265036.10">
    <property type="protein sequence ID" value="ENSP00000265036.5"/>
    <property type="RefSeq nucleotide sequence ID" value="NM_018369.3"/>
    <property type="RefSeq protein sequence ID" value="NP_060839.2"/>
</dbReference>
<dbReference type="UCSC" id="uc003jsh.4">
    <molecule id="Q8WUY9-1"/>
    <property type="organism name" value="human"/>
</dbReference>
<dbReference type="AGR" id="HGNC:24902"/>
<dbReference type="CTD" id="55789"/>
<dbReference type="DisGeNET" id="55789"/>
<dbReference type="GeneCards" id="DEPDC1B"/>
<dbReference type="HGNC" id="HGNC:24902">
    <property type="gene designation" value="DEPDC1B"/>
</dbReference>
<dbReference type="HPA" id="ENSG00000035499">
    <property type="expression patterns" value="Tissue enhanced (bone marrow, gallbladder, lymphoid tissue, testis)"/>
</dbReference>
<dbReference type="MIM" id="616066">
    <property type="type" value="gene"/>
</dbReference>
<dbReference type="neXtProt" id="NX_Q8WUY9"/>
<dbReference type="OpenTargets" id="ENSG00000035499"/>
<dbReference type="PharmGKB" id="PA134941087"/>
<dbReference type="VEuPathDB" id="HostDB:ENSG00000035499"/>
<dbReference type="eggNOG" id="ENOG502QR00">
    <property type="taxonomic scope" value="Eukaryota"/>
</dbReference>
<dbReference type="GeneTree" id="ENSGT00950000182976"/>
<dbReference type="HOGENOM" id="CLU_040757_0_0_1"/>
<dbReference type="InParanoid" id="Q8WUY9"/>
<dbReference type="OMA" id="KPHLMFF"/>
<dbReference type="OrthoDB" id="524326at2759"/>
<dbReference type="PAN-GO" id="Q8WUY9">
    <property type="GO annotations" value="1 GO annotation based on evolutionary models"/>
</dbReference>
<dbReference type="PhylomeDB" id="Q8WUY9"/>
<dbReference type="TreeFam" id="TF328365"/>
<dbReference type="PathwayCommons" id="Q8WUY9"/>
<dbReference type="Reactome" id="R-HSA-8980692">
    <property type="pathway name" value="RHOA GTPase cycle"/>
</dbReference>
<dbReference type="Reactome" id="R-HSA-9013026">
    <property type="pathway name" value="RHOB GTPase cycle"/>
</dbReference>
<dbReference type="Reactome" id="R-HSA-9013106">
    <property type="pathway name" value="RHOC GTPase cycle"/>
</dbReference>
<dbReference type="Reactome" id="R-HSA-9013148">
    <property type="pathway name" value="CDC42 GTPase cycle"/>
</dbReference>
<dbReference type="Reactome" id="R-HSA-9013149">
    <property type="pathway name" value="RAC1 GTPase cycle"/>
</dbReference>
<dbReference type="Reactome" id="R-HSA-9013404">
    <property type="pathway name" value="RAC2 GTPase cycle"/>
</dbReference>
<dbReference type="Reactome" id="R-HSA-9013405">
    <property type="pathway name" value="RHOD GTPase cycle"/>
</dbReference>
<dbReference type="Reactome" id="R-HSA-9013406">
    <property type="pathway name" value="RHOQ GTPase cycle"/>
</dbReference>
<dbReference type="Reactome" id="R-HSA-9013408">
    <property type="pathway name" value="RHOG GTPase cycle"/>
</dbReference>
<dbReference type="Reactome" id="R-HSA-9013409">
    <property type="pathway name" value="RHOJ GTPase cycle"/>
</dbReference>
<dbReference type="Reactome" id="R-HSA-9013420">
    <property type="pathway name" value="RHOU GTPase cycle"/>
</dbReference>
<dbReference type="Reactome" id="R-HSA-9013423">
    <property type="pathway name" value="RAC3 GTPase cycle"/>
</dbReference>
<dbReference type="Reactome" id="R-HSA-9013424">
    <property type="pathway name" value="RHOV GTPase cycle"/>
</dbReference>
<dbReference type="Reactome" id="R-HSA-9035034">
    <property type="pathway name" value="RHOF GTPase cycle"/>
</dbReference>
<dbReference type="Reactome" id="R-HSA-9696264">
    <property type="pathway name" value="RND3 GTPase cycle"/>
</dbReference>
<dbReference type="Reactome" id="R-HSA-9696270">
    <property type="pathway name" value="RND2 GTPase cycle"/>
</dbReference>
<dbReference type="Reactome" id="R-HSA-9696273">
    <property type="pathway name" value="RND1 GTPase cycle"/>
</dbReference>
<dbReference type="SignaLink" id="Q8WUY9"/>
<dbReference type="BioGRID-ORCS" id="55789">
    <property type="hits" value="12 hits in 1159 CRISPR screens"/>
</dbReference>
<dbReference type="ChiTaRS" id="DEPDC1B">
    <property type="organism name" value="human"/>
</dbReference>
<dbReference type="GenomeRNAi" id="55789"/>
<dbReference type="Pharos" id="Q8WUY9">
    <property type="development level" value="Tbio"/>
</dbReference>
<dbReference type="PRO" id="PR:Q8WUY9"/>
<dbReference type="Proteomes" id="UP000005640">
    <property type="component" value="Chromosome 5"/>
</dbReference>
<dbReference type="RNAct" id="Q8WUY9">
    <property type="molecule type" value="protein"/>
</dbReference>
<dbReference type="Bgee" id="ENSG00000035499">
    <property type="expression patterns" value="Expressed in secondary oocyte and 125 other cell types or tissues"/>
</dbReference>
<dbReference type="ExpressionAtlas" id="Q8WUY9">
    <property type="expression patterns" value="baseline and differential"/>
</dbReference>
<dbReference type="GO" id="GO:0005096">
    <property type="term" value="F:GTPase activator activity"/>
    <property type="evidence" value="ECO:0007669"/>
    <property type="project" value="UniProtKB-KW"/>
</dbReference>
<dbReference type="GO" id="GO:0016477">
    <property type="term" value="P:cell migration"/>
    <property type="evidence" value="ECO:0000315"/>
    <property type="project" value="UniProtKB"/>
</dbReference>
<dbReference type="GO" id="GO:0035556">
    <property type="term" value="P:intracellular signal transduction"/>
    <property type="evidence" value="ECO:0007669"/>
    <property type="project" value="InterPro"/>
</dbReference>
<dbReference type="GO" id="GO:0030177">
    <property type="term" value="P:positive regulation of Wnt signaling pathway"/>
    <property type="evidence" value="ECO:0000315"/>
    <property type="project" value="UniProtKB"/>
</dbReference>
<dbReference type="CDD" id="cd04447">
    <property type="entry name" value="DEP_BRCC3"/>
    <property type="match status" value="1"/>
</dbReference>
<dbReference type="CDD" id="cd04405">
    <property type="entry name" value="RhoGAP_BRCC3-like"/>
    <property type="match status" value="1"/>
</dbReference>
<dbReference type="FunFam" id="1.10.10.10:FF:000182">
    <property type="entry name" value="DEP domain-containing protein 1B isoform 1"/>
    <property type="match status" value="1"/>
</dbReference>
<dbReference type="FunFam" id="1.10.555.10:FF:000029">
    <property type="entry name" value="DEP domain-containing protein 1B isoform X2"/>
    <property type="match status" value="1"/>
</dbReference>
<dbReference type="Gene3D" id="1.10.555.10">
    <property type="entry name" value="Rho GTPase activation protein"/>
    <property type="match status" value="1"/>
</dbReference>
<dbReference type="Gene3D" id="1.10.10.10">
    <property type="entry name" value="Winged helix-like DNA-binding domain superfamily/Winged helix DNA-binding domain"/>
    <property type="match status" value="1"/>
</dbReference>
<dbReference type="InterPro" id="IPR000591">
    <property type="entry name" value="DEP_dom"/>
</dbReference>
<dbReference type="InterPro" id="IPR008936">
    <property type="entry name" value="Rho_GTPase_activation_prot"/>
</dbReference>
<dbReference type="InterPro" id="IPR000198">
    <property type="entry name" value="RhoGAP_dom"/>
</dbReference>
<dbReference type="InterPro" id="IPR036388">
    <property type="entry name" value="WH-like_DNA-bd_sf"/>
</dbReference>
<dbReference type="InterPro" id="IPR036390">
    <property type="entry name" value="WH_DNA-bd_sf"/>
</dbReference>
<dbReference type="PANTHER" id="PTHR16206">
    <property type="entry name" value="DEP DOMAIN-CONTAINING"/>
    <property type="match status" value="1"/>
</dbReference>
<dbReference type="PANTHER" id="PTHR16206:SF11">
    <property type="entry name" value="DEP DOMAIN-CONTAINING PROTEIN 1B"/>
    <property type="match status" value="1"/>
</dbReference>
<dbReference type="Pfam" id="PF00610">
    <property type="entry name" value="DEP"/>
    <property type="match status" value="1"/>
</dbReference>
<dbReference type="Pfam" id="PF00620">
    <property type="entry name" value="RhoGAP"/>
    <property type="match status" value="1"/>
</dbReference>
<dbReference type="SMART" id="SM00049">
    <property type="entry name" value="DEP"/>
    <property type="match status" value="1"/>
</dbReference>
<dbReference type="SUPFAM" id="SSF48350">
    <property type="entry name" value="GTPase activation domain, GAP"/>
    <property type="match status" value="1"/>
</dbReference>
<dbReference type="SUPFAM" id="SSF46785">
    <property type="entry name" value="Winged helix' DNA-binding domain"/>
    <property type="match status" value="1"/>
</dbReference>
<dbReference type="PROSITE" id="PS50186">
    <property type="entry name" value="DEP"/>
    <property type="match status" value="1"/>
</dbReference>
<dbReference type="PROSITE" id="PS50238">
    <property type="entry name" value="RHOGAP"/>
    <property type="match status" value="1"/>
</dbReference>
<protein>
    <recommendedName>
        <fullName>DEP domain-containing protein 1B</fullName>
    </recommendedName>
    <alternativeName>
        <fullName>HBV X-transactivated gene 8 protein</fullName>
    </alternativeName>
    <alternativeName>
        <fullName>HBV XAg-transactivated protein 8</fullName>
    </alternativeName>
</protein>